<protein>
    <recommendedName>
        <fullName evidence="1">Bifunctional protein GlmU</fullName>
    </recommendedName>
    <domain>
        <recommendedName>
            <fullName evidence="1">UDP-N-acetylglucosamine pyrophosphorylase</fullName>
            <ecNumber evidence="1">2.7.7.23</ecNumber>
        </recommendedName>
        <alternativeName>
            <fullName evidence="1">N-acetylglucosamine-1-phosphate uridyltransferase</fullName>
        </alternativeName>
    </domain>
    <domain>
        <recommendedName>
            <fullName evidence="1">Glucosamine-1-phosphate N-acetyltransferase</fullName>
            <ecNumber evidence="1">2.3.1.157</ecNumber>
        </recommendedName>
    </domain>
</protein>
<proteinExistence type="inferred from homology"/>
<name>GLMU_SHIDS</name>
<keyword id="KW-0012">Acyltransferase</keyword>
<keyword id="KW-0133">Cell shape</keyword>
<keyword id="KW-0961">Cell wall biogenesis/degradation</keyword>
<keyword id="KW-0963">Cytoplasm</keyword>
<keyword id="KW-0460">Magnesium</keyword>
<keyword id="KW-0479">Metal-binding</keyword>
<keyword id="KW-0511">Multifunctional enzyme</keyword>
<keyword id="KW-0548">Nucleotidyltransferase</keyword>
<keyword id="KW-0573">Peptidoglycan synthesis</keyword>
<keyword id="KW-1185">Reference proteome</keyword>
<keyword id="KW-0677">Repeat</keyword>
<keyword id="KW-0808">Transferase</keyword>
<comment type="function">
    <text evidence="1">Catalyzes the last two sequential reactions in the de novo biosynthetic pathway for UDP-N-acetylglucosamine (UDP-GlcNAc). The C-terminal domain catalyzes the transfer of acetyl group from acetyl coenzyme A to glucosamine-1-phosphate (GlcN-1-P) to produce N-acetylglucosamine-1-phosphate (GlcNAc-1-P), which is converted into UDP-GlcNAc by the transfer of uridine 5-monophosphate (from uridine 5-triphosphate), a reaction catalyzed by the N-terminal domain.</text>
</comment>
<comment type="catalytic activity">
    <reaction evidence="1">
        <text>alpha-D-glucosamine 1-phosphate + acetyl-CoA = N-acetyl-alpha-D-glucosamine 1-phosphate + CoA + H(+)</text>
        <dbReference type="Rhea" id="RHEA:13725"/>
        <dbReference type="ChEBI" id="CHEBI:15378"/>
        <dbReference type="ChEBI" id="CHEBI:57287"/>
        <dbReference type="ChEBI" id="CHEBI:57288"/>
        <dbReference type="ChEBI" id="CHEBI:57776"/>
        <dbReference type="ChEBI" id="CHEBI:58516"/>
        <dbReference type="EC" id="2.3.1.157"/>
    </reaction>
</comment>
<comment type="catalytic activity">
    <reaction evidence="1">
        <text>N-acetyl-alpha-D-glucosamine 1-phosphate + UTP + H(+) = UDP-N-acetyl-alpha-D-glucosamine + diphosphate</text>
        <dbReference type="Rhea" id="RHEA:13509"/>
        <dbReference type="ChEBI" id="CHEBI:15378"/>
        <dbReference type="ChEBI" id="CHEBI:33019"/>
        <dbReference type="ChEBI" id="CHEBI:46398"/>
        <dbReference type="ChEBI" id="CHEBI:57705"/>
        <dbReference type="ChEBI" id="CHEBI:57776"/>
        <dbReference type="EC" id="2.7.7.23"/>
    </reaction>
</comment>
<comment type="cofactor">
    <cofactor evidence="1">
        <name>Mg(2+)</name>
        <dbReference type="ChEBI" id="CHEBI:18420"/>
    </cofactor>
    <text evidence="1">Binds 1 Mg(2+) ion per subunit.</text>
</comment>
<comment type="pathway">
    <text evidence="1">Nucleotide-sugar biosynthesis; UDP-N-acetyl-alpha-D-glucosamine biosynthesis; N-acetyl-alpha-D-glucosamine 1-phosphate from alpha-D-glucosamine 6-phosphate (route II): step 2/2.</text>
</comment>
<comment type="pathway">
    <text evidence="1">Nucleotide-sugar biosynthesis; UDP-N-acetyl-alpha-D-glucosamine biosynthesis; UDP-N-acetyl-alpha-D-glucosamine from N-acetyl-alpha-D-glucosamine 1-phosphate: step 1/1.</text>
</comment>
<comment type="pathway">
    <text evidence="1">Bacterial outer membrane biogenesis; LPS lipid A biosynthesis.</text>
</comment>
<comment type="subunit">
    <text evidence="1">Homotrimer.</text>
</comment>
<comment type="subcellular location">
    <subcellularLocation>
        <location evidence="1">Cytoplasm</location>
    </subcellularLocation>
</comment>
<comment type="similarity">
    <text evidence="1">In the N-terminal section; belongs to the N-acetylglucosamine-1-phosphate uridyltransferase family.</text>
</comment>
<comment type="similarity">
    <text evidence="1">In the C-terminal section; belongs to the transferase hexapeptide repeat family.</text>
</comment>
<sequence length="456" mass="49218">MLNNAMSVVILAAGKGTRMYSDLPKVLHTLAGKAMVQHVIDAANELGAAHVHLVYGHGGDLLKQALKDDNLNWVLQAEQLGTGHAMQQAAPFFADDEDILMLYGDVPLISVETLQRLRDARPQGGIGLLTVKLDDPTGYGRITRENGKVTGIVEHKDATDEQRQIQEINTGILIANGADMKRWLAKLTNNNAQGEYYITDIIALAYQEGREIVAVHPQRLSEVEGVNNRLQLSRLERVYQSEQAEKLLLAGVMLRDPARFDLRGTLTHGRDVEIDTNVIIEGNVTLGHRVKIGTGCVIKNSVIGDDCEISPYTVVEDANLAAACTIGPFARLRPGAELLEGAHVGNFVEMKKARLGKGSKAGHLTYLGDAEIGDNVNIGAGTITCNYDGANKFKTIIGDDVFVGSDTQLVAPVTVGKGATIAAGTTVTRNVGENALAISRVPQTQKEGWRRPVKKK</sequence>
<gene>
    <name evidence="1" type="primary">glmU</name>
    <name type="ordered locus">SDY_4018</name>
</gene>
<dbReference type="EC" id="2.7.7.23" evidence="1"/>
<dbReference type="EC" id="2.3.1.157" evidence="1"/>
<dbReference type="EMBL" id="CP000034">
    <property type="protein sequence ID" value="ABB63936.1"/>
    <property type="molecule type" value="Genomic_DNA"/>
</dbReference>
<dbReference type="RefSeq" id="WP_000933753.1">
    <property type="nucleotide sequence ID" value="NC_007606.1"/>
</dbReference>
<dbReference type="RefSeq" id="YP_405427.1">
    <property type="nucleotide sequence ID" value="NC_007606.1"/>
</dbReference>
<dbReference type="SMR" id="Q329R9"/>
<dbReference type="STRING" id="300267.SDY_4018"/>
<dbReference type="EnsemblBacteria" id="ABB63936">
    <property type="protein sequence ID" value="ABB63936"/>
    <property type="gene ID" value="SDY_4018"/>
</dbReference>
<dbReference type="KEGG" id="sdy:SDY_4018"/>
<dbReference type="PATRIC" id="fig|300267.13.peg.4731"/>
<dbReference type="HOGENOM" id="CLU_029499_15_2_6"/>
<dbReference type="UniPathway" id="UPA00113">
    <property type="reaction ID" value="UER00532"/>
</dbReference>
<dbReference type="UniPathway" id="UPA00113">
    <property type="reaction ID" value="UER00533"/>
</dbReference>
<dbReference type="UniPathway" id="UPA00973"/>
<dbReference type="Proteomes" id="UP000002716">
    <property type="component" value="Chromosome"/>
</dbReference>
<dbReference type="GO" id="GO:0005737">
    <property type="term" value="C:cytoplasm"/>
    <property type="evidence" value="ECO:0007669"/>
    <property type="project" value="UniProtKB-SubCell"/>
</dbReference>
<dbReference type="GO" id="GO:0016020">
    <property type="term" value="C:membrane"/>
    <property type="evidence" value="ECO:0007669"/>
    <property type="project" value="GOC"/>
</dbReference>
<dbReference type="GO" id="GO:0019134">
    <property type="term" value="F:glucosamine-1-phosphate N-acetyltransferase activity"/>
    <property type="evidence" value="ECO:0007669"/>
    <property type="project" value="UniProtKB-UniRule"/>
</dbReference>
<dbReference type="GO" id="GO:0000287">
    <property type="term" value="F:magnesium ion binding"/>
    <property type="evidence" value="ECO:0007669"/>
    <property type="project" value="UniProtKB-UniRule"/>
</dbReference>
<dbReference type="GO" id="GO:0003977">
    <property type="term" value="F:UDP-N-acetylglucosamine diphosphorylase activity"/>
    <property type="evidence" value="ECO:0007669"/>
    <property type="project" value="UniProtKB-UniRule"/>
</dbReference>
<dbReference type="GO" id="GO:0000902">
    <property type="term" value="P:cell morphogenesis"/>
    <property type="evidence" value="ECO:0007669"/>
    <property type="project" value="UniProtKB-UniRule"/>
</dbReference>
<dbReference type="GO" id="GO:0071555">
    <property type="term" value="P:cell wall organization"/>
    <property type="evidence" value="ECO:0007669"/>
    <property type="project" value="UniProtKB-KW"/>
</dbReference>
<dbReference type="GO" id="GO:0009245">
    <property type="term" value="P:lipid A biosynthetic process"/>
    <property type="evidence" value="ECO:0007669"/>
    <property type="project" value="UniProtKB-UniRule"/>
</dbReference>
<dbReference type="GO" id="GO:0009252">
    <property type="term" value="P:peptidoglycan biosynthetic process"/>
    <property type="evidence" value="ECO:0007669"/>
    <property type="project" value="UniProtKB-UniRule"/>
</dbReference>
<dbReference type="GO" id="GO:0008360">
    <property type="term" value="P:regulation of cell shape"/>
    <property type="evidence" value="ECO:0007669"/>
    <property type="project" value="UniProtKB-KW"/>
</dbReference>
<dbReference type="GO" id="GO:0006048">
    <property type="term" value="P:UDP-N-acetylglucosamine biosynthetic process"/>
    <property type="evidence" value="ECO:0007669"/>
    <property type="project" value="UniProtKB-UniPathway"/>
</dbReference>
<dbReference type="CDD" id="cd02540">
    <property type="entry name" value="GT2_GlmU_N_bac"/>
    <property type="match status" value="1"/>
</dbReference>
<dbReference type="CDD" id="cd03353">
    <property type="entry name" value="LbH_GlmU_C"/>
    <property type="match status" value="1"/>
</dbReference>
<dbReference type="FunFam" id="2.160.10.10:FF:000011">
    <property type="entry name" value="Bifunctional protein GlmU"/>
    <property type="match status" value="1"/>
</dbReference>
<dbReference type="FunFam" id="3.90.550.10:FF:000006">
    <property type="entry name" value="Bifunctional protein GlmU"/>
    <property type="match status" value="1"/>
</dbReference>
<dbReference type="Gene3D" id="2.160.10.10">
    <property type="entry name" value="Hexapeptide repeat proteins"/>
    <property type="match status" value="1"/>
</dbReference>
<dbReference type="Gene3D" id="3.90.550.10">
    <property type="entry name" value="Spore Coat Polysaccharide Biosynthesis Protein SpsA, Chain A"/>
    <property type="match status" value="1"/>
</dbReference>
<dbReference type="HAMAP" id="MF_01631">
    <property type="entry name" value="GlmU"/>
    <property type="match status" value="1"/>
</dbReference>
<dbReference type="InterPro" id="IPR005882">
    <property type="entry name" value="Bifunctional_GlmU"/>
</dbReference>
<dbReference type="InterPro" id="IPR050065">
    <property type="entry name" value="GlmU-like"/>
</dbReference>
<dbReference type="InterPro" id="IPR038009">
    <property type="entry name" value="GlmU_C_LbH"/>
</dbReference>
<dbReference type="InterPro" id="IPR001451">
    <property type="entry name" value="Hexapep"/>
</dbReference>
<dbReference type="InterPro" id="IPR018357">
    <property type="entry name" value="Hexapep_transf_CS"/>
</dbReference>
<dbReference type="InterPro" id="IPR025877">
    <property type="entry name" value="MobA-like_NTP_Trfase"/>
</dbReference>
<dbReference type="InterPro" id="IPR029044">
    <property type="entry name" value="Nucleotide-diphossugar_trans"/>
</dbReference>
<dbReference type="InterPro" id="IPR011004">
    <property type="entry name" value="Trimer_LpxA-like_sf"/>
</dbReference>
<dbReference type="NCBIfam" id="TIGR01173">
    <property type="entry name" value="glmU"/>
    <property type="match status" value="1"/>
</dbReference>
<dbReference type="NCBIfam" id="NF006986">
    <property type="entry name" value="PRK09451.1"/>
    <property type="match status" value="1"/>
</dbReference>
<dbReference type="PANTHER" id="PTHR43584:SF3">
    <property type="entry name" value="BIFUNCTIONAL PROTEIN GLMU"/>
    <property type="match status" value="1"/>
</dbReference>
<dbReference type="PANTHER" id="PTHR43584">
    <property type="entry name" value="NUCLEOTIDYL TRANSFERASE"/>
    <property type="match status" value="1"/>
</dbReference>
<dbReference type="Pfam" id="PF00132">
    <property type="entry name" value="Hexapep"/>
    <property type="match status" value="1"/>
</dbReference>
<dbReference type="Pfam" id="PF12804">
    <property type="entry name" value="NTP_transf_3"/>
    <property type="match status" value="1"/>
</dbReference>
<dbReference type="SUPFAM" id="SSF53448">
    <property type="entry name" value="Nucleotide-diphospho-sugar transferases"/>
    <property type="match status" value="1"/>
</dbReference>
<dbReference type="SUPFAM" id="SSF51161">
    <property type="entry name" value="Trimeric LpxA-like enzymes"/>
    <property type="match status" value="1"/>
</dbReference>
<dbReference type="PROSITE" id="PS00101">
    <property type="entry name" value="HEXAPEP_TRANSFERASES"/>
    <property type="match status" value="1"/>
</dbReference>
<organism>
    <name type="scientific">Shigella dysenteriae serotype 1 (strain Sd197)</name>
    <dbReference type="NCBI Taxonomy" id="300267"/>
    <lineage>
        <taxon>Bacteria</taxon>
        <taxon>Pseudomonadati</taxon>
        <taxon>Pseudomonadota</taxon>
        <taxon>Gammaproteobacteria</taxon>
        <taxon>Enterobacterales</taxon>
        <taxon>Enterobacteriaceae</taxon>
        <taxon>Shigella</taxon>
    </lineage>
</organism>
<evidence type="ECO:0000255" key="1">
    <source>
        <dbReference type="HAMAP-Rule" id="MF_01631"/>
    </source>
</evidence>
<accession>Q329R9</accession>
<feature type="chain" id="PRO_0000233841" description="Bifunctional protein GlmU">
    <location>
        <begin position="1"/>
        <end position="456"/>
    </location>
</feature>
<feature type="region of interest" description="Pyrophosphorylase" evidence="1">
    <location>
        <begin position="1"/>
        <end position="229"/>
    </location>
</feature>
<feature type="region of interest" description="Linker" evidence="1">
    <location>
        <begin position="230"/>
        <end position="250"/>
    </location>
</feature>
<feature type="region of interest" description="N-acetyltransferase" evidence="1">
    <location>
        <begin position="251"/>
        <end position="456"/>
    </location>
</feature>
<feature type="active site" description="Proton acceptor" evidence="1">
    <location>
        <position position="363"/>
    </location>
</feature>
<feature type="binding site" evidence="1">
    <location>
        <begin position="11"/>
        <end position="14"/>
    </location>
    <ligand>
        <name>UDP-N-acetyl-alpha-D-glucosamine</name>
        <dbReference type="ChEBI" id="CHEBI:57705"/>
    </ligand>
</feature>
<feature type="binding site" evidence="1">
    <location>
        <position position="25"/>
    </location>
    <ligand>
        <name>UDP-N-acetyl-alpha-D-glucosamine</name>
        <dbReference type="ChEBI" id="CHEBI:57705"/>
    </ligand>
</feature>
<feature type="binding site" evidence="1">
    <location>
        <position position="76"/>
    </location>
    <ligand>
        <name>UDP-N-acetyl-alpha-D-glucosamine</name>
        <dbReference type="ChEBI" id="CHEBI:57705"/>
    </ligand>
</feature>
<feature type="binding site" evidence="1">
    <location>
        <begin position="81"/>
        <end position="82"/>
    </location>
    <ligand>
        <name>UDP-N-acetyl-alpha-D-glucosamine</name>
        <dbReference type="ChEBI" id="CHEBI:57705"/>
    </ligand>
</feature>
<feature type="binding site" evidence="1">
    <location>
        <begin position="103"/>
        <end position="105"/>
    </location>
    <ligand>
        <name>UDP-N-acetyl-alpha-D-glucosamine</name>
        <dbReference type="ChEBI" id="CHEBI:57705"/>
    </ligand>
</feature>
<feature type="binding site" evidence="1">
    <location>
        <position position="105"/>
    </location>
    <ligand>
        <name>Mg(2+)</name>
        <dbReference type="ChEBI" id="CHEBI:18420"/>
    </ligand>
</feature>
<feature type="binding site" evidence="1">
    <location>
        <position position="140"/>
    </location>
    <ligand>
        <name>UDP-N-acetyl-alpha-D-glucosamine</name>
        <dbReference type="ChEBI" id="CHEBI:57705"/>
    </ligand>
</feature>
<feature type="binding site" evidence="1">
    <location>
        <position position="154"/>
    </location>
    <ligand>
        <name>UDP-N-acetyl-alpha-D-glucosamine</name>
        <dbReference type="ChEBI" id="CHEBI:57705"/>
    </ligand>
</feature>
<feature type="binding site" evidence="1">
    <location>
        <position position="169"/>
    </location>
    <ligand>
        <name>UDP-N-acetyl-alpha-D-glucosamine</name>
        <dbReference type="ChEBI" id="CHEBI:57705"/>
    </ligand>
</feature>
<feature type="binding site" evidence="1">
    <location>
        <position position="227"/>
    </location>
    <ligand>
        <name>Mg(2+)</name>
        <dbReference type="ChEBI" id="CHEBI:18420"/>
    </ligand>
</feature>
<feature type="binding site" evidence="1">
    <location>
        <position position="227"/>
    </location>
    <ligand>
        <name>UDP-N-acetyl-alpha-D-glucosamine</name>
        <dbReference type="ChEBI" id="CHEBI:57705"/>
    </ligand>
</feature>
<feature type="binding site" evidence="1">
    <location>
        <position position="333"/>
    </location>
    <ligand>
        <name>UDP-N-acetyl-alpha-D-glucosamine</name>
        <dbReference type="ChEBI" id="CHEBI:57705"/>
    </ligand>
</feature>
<feature type="binding site" evidence="1">
    <location>
        <position position="351"/>
    </location>
    <ligand>
        <name>UDP-N-acetyl-alpha-D-glucosamine</name>
        <dbReference type="ChEBI" id="CHEBI:57705"/>
    </ligand>
</feature>
<feature type="binding site" evidence="1">
    <location>
        <position position="366"/>
    </location>
    <ligand>
        <name>UDP-N-acetyl-alpha-D-glucosamine</name>
        <dbReference type="ChEBI" id="CHEBI:57705"/>
    </ligand>
</feature>
<feature type="binding site" evidence="1">
    <location>
        <position position="377"/>
    </location>
    <ligand>
        <name>UDP-N-acetyl-alpha-D-glucosamine</name>
        <dbReference type="ChEBI" id="CHEBI:57705"/>
    </ligand>
</feature>
<feature type="binding site" evidence="1">
    <location>
        <position position="380"/>
    </location>
    <ligand>
        <name>acetyl-CoA</name>
        <dbReference type="ChEBI" id="CHEBI:57288"/>
    </ligand>
</feature>
<feature type="binding site" evidence="1">
    <location>
        <begin position="386"/>
        <end position="387"/>
    </location>
    <ligand>
        <name>acetyl-CoA</name>
        <dbReference type="ChEBI" id="CHEBI:57288"/>
    </ligand>
</feature>
<feature type="binding site" evidence="1">
    <location>
        <position position="405"/>
    </location>
    <ligand>
        <name>acetyl-CoA</name>
        <dbReference type="ChEBI" id="CHEBI:57288"/>
    </ligand>
</feature>
<feature type="binding site" evidence="1">
    <location>
        <position position="423"/>
    </location>
    <ligand>
        <name>acetyl-CoA</name>
        <dbReference type="ChEBI" id="CHEBI:57288"/>
    </ligand>
</feature>
<feature type="binding site" evidence="1">
    <location>
        <position position="440"/>
    </location>
    <ligand>
        <name>acetyl-CoA</name>
        <dbReference type="ChEBI" id="CHEBI:57288"/>
    </ligand>
</feature>
<reference key="1">
    <citation type="journal article" date="2005" name="Nucleic Acids Res.">
        <title>Genome dynamics and diversity of Shigella species, the etiologic agents of bacillary dysentery.</title>
        <authorList>
            <person name="Yang F."/>
            <person name="Yang J."/>
            <person name="Zhang X."/>
            <person name="Chen L."/>
            <person name="Jiang Y."/>
            <person name="Yan Y."/>
            <person name="Tang X."/>
            <person name="Wang J."/>
            <person name="Xiong Z."/>
            <person name="Dong J."/>
            <person name="Xue Y."/>
            <person name="Zhu Y."/>
            <person name="Xu X."/>
            <person name="Sun L."/>
            <person name="Chen S."/>
            <person name="Nie H."/>
            <person name="Peng J."/>
            <person name="Xu J."/>
            <person name="Wang Y."/>
            <person name="Yuan Z."/>
            <person name="Wen Y."/>
            <person name="Yao Z."/>
            <person name="Shen Y."/>
            <person name="Qiang B."/>
            <person name="Hou Y."/>
            <person name="Yu J."/>
            <person name="Jin Q."/>
        </authorList>
    </citation>
    <scope>NUCLEOTIDE SEQUENCE [LARGE SCALE GENOMIC DNA]</scope>
    <source>
        <strain>Sd197</strain>
    </source>
</reference>